<proteinExistence type="inferred from homology"/>
<evidence type="ECO:0000255" key="1">
    <source>
        <dbReference type="HAMAP-Rule" id="MF_01043"/>
    </source>
</evidence>
<protein>
    <recommendedName>
        <fullName evidence="1">Glycerol-3-phosphate acyltransferase</fullName>
    </recommendedName>
    <alternativeName>
        <fullName evidence="1">Acyl-PO4 G3P acyltransferase</fullName>
    </alternativeName>
    <alternativeName>
        <fullName evidence="1">Acyl-phosphate--glycerol-3-phosphate acyltransferase</fullName>
    </alternativeName>
    <alternativeName>
        <fullName evidence="1">G3P acyltransferase</fullName>
        <shortName evidence="1">GPAT</shortName>
        <ecNumber evidence="1">2.3.1.275</ecNumber>
    </alternativeName>
    <alternativeName>
        <fullName evidence="1">Lysophosphatidic acid synthase</fullName>
        <shortName evidence="1">LPA synthase</shortName>
    </alternativeName>
</protein>
<gene>
    <name evidence="1" type="primary">plsY</name>
    <name type="ordered locus">LACR_1064</name>
</gene>
<organism>
    <name type="scientific">Lactococcus lactis subsp. cremoris (strain SK11)</name>
    <dbReference type="NCBI Taxonomy" id="272622"/>
    <lineage>
        <taxon>Bacteria</taxon>
        <taxon>Bacillati</taxon>
        <taxon>Bacillota</taxon>
        <taxon>Bacilli</taxon>
        <taxon>Lactobacillales</taxon>
        <taxon>Streptococcaceae</taxon>
        <taxon>Lactococcus</taxon>
        <taxon>Lactococcus cremoris subsp. cremoris</taxon>
    </lineage>
</organism>
<accession>Q02ZM1</accession>
<name>PLSY_LACLS</name>
<comment type="function">
    <text evidence="1">Catalyzes the transfer of an acyl group from acyl-phosphate (acyl-PO(4)) to glycerol-3-phosphate (G3P) to form lysophosphatidic acid (LPA). This enzyme utilizes acyl-phosphate as fatty acyl donor, but not acyl-CoA or acyl-ACP.</text>
</comment>
<comment type="catalytic activity">
    <reaction evidence="1">
        <text>an acyl phosphate + sn-glycerol 3-phosphate = a 1-acyl-sn-glycero-3-phosphate + phosphate</text>
        <dbReference type="Rhea" id="RHEA:34075"/>
        <dbReference type="ChEBI" id="CHEBI:43474"/>
        <dbReference type="ChEBI" id="CHEBI:57597"/>
        <dbReference type="ChEBI" id="CHEBI:57970"/>
        <dbReference type="ChEBI" id="CHEBI:59918"/>
        <dbReference type="EC" id="2.3.1.275"/>
    </reaction>
</comment>
<comment type="pathway">
    <text evidence="1">Lipid metabolism; phospholipid metabolism.</text>
</comment>
<comment type="subunit">
    <text evidence="1">Probably interacts with PlsX.</text>
</comment>
<comment type="subcellular location">
    <subcellularLocation>
        <location evidence="1">Cell membrane</location>
        <topology evidence="1">Multi-pass membrane protein</topology>
    </subcellularLocation>
</comment>
<comment type="similarity">
    <text evidence="1">Belongs to the PlsY family.</text>
</comment>
<sequence>MLIIILLLIASYLLGAIPFGLWIGKIFFKKNLHDYGSGNTGTTNTFRILGVKAGIAVFIFDLLKGTLATLLPLIFHINGVSPLIFGLLAVIGHTLSIFDHFKGGKAVATSAGVVLGFSPFFLLYLLVIFILVLWLFSMISLSSVVAAIFALLGILIFPSFGFILTSYDLLFSIIIFALAIIIIFRHKTNLKRIKNHCESLVPFGLNLSGQKEK</sequence>
<reference key="1">
    <citation type="journal article" date="2006" name="Proc. Natl. Acad. Sci. U.S.A.">
        <title>Comparative genomics of the lactic acid bacteria.</title>
        <authorList>
            <person name="Makarova K.S."/>
            <person name="Slesarev A."/>
            <person name="Wolf Y.I."/>
            <person name="Sorokin A."/>
            <person name="Mirkin B."/>
            <person name="Koonin E.V."/>
            <person name="Pavlov A."/>
            <person name="Pavlova N."/>
            <person name="Karamychev V."/>
            <person name="Polouchine N."/>
            <person name="Shakhova V."/>
            <person name="Grigoriev I."/>
            <person name="Lou Y."/>
            <person name="Rohksar D."/>
            <person name="Lucas S."/>
            <person name="Huang K."/>
            <person name="Goodstein D.M."/>
            <person name="Hawkins T."/>
            <person name="Plengvidhya V."/>
            <person name="Welker D."/>
            <person name="Hughes J."/>
            <person name="Goh Y."/>
            <person name="Benson A."/>
            <person name="Baldwin K."/>
            <person name="Lee J.-H."/>
            <person name="Diaz-Muniz I."/>
            <person name="Dosti B."/>
            <person name="Smeianov V."/>
            <person name="Wechter W."/>
            <person name="Barabote R."/>
            <person name="Lorca G."/>
            <person name="Altermann E."/>
            <person name="Barrangou R."/>
            <person name="Ganesan B."/>
            <person name="Xie Y."/>
            <person name="Rawsthorne H."/>
            <person name="Tamir D."/>
            <person name="Parker C."/>
            <person name="Breidt F."/>
            <person name="Broadbent J.R."/>
            <person name="Hutkins R."/>
            <person name="O'Sullivan D."/>
            <person name="Steele J."/>
            <person name="Unlu G."/>
            <person name="Saier M.H. Jr."/>
            <person name="Klaenhammer T."/>
            <person name="Richardson P."/>
            <person name="Kozyavkin S."/>
            <person name="Weimer B.C."/>
            <person name="Mills D.A."/>
        </authorList>
    </citation>
    <scope>NUCLEOTIDE SEQUENCE [LARGE SCALE GENOMIC DNA]</scope>
    <source>
        <strain>SK11</strain>
    </source>
</reference>
<feature type="chain" id="PRO_1000064190" description="Glycerol-3-phosphate acyltransferase">
    <location>
        <begin position="1"/>
        <end position="213"/>
    </location>
</feature>
<feature type="transmembrane region" description="Helical" evidence="1">
    <location>
        <begin position="3"/>
        <end position="23"/>
    </location>
</feature>
<feature type="transmembrane region" description="Helical" evidence="1">
    <location>
        <begin position="48"/>
        <end position="68"/>
    </location>
</feature>
<feature type="transmembrane region" description="Helical" evidence="1">
    <location>
        <begin position="71"/>
        <end position="91"/>
    </location>
</feature>
<feature type="transmembrane region" description="Helical" evidence="1">
    <location>
        <begin position="119"/>
        <end position="139"/>
    </location>
</feature>
<feature type="transmembrane region" description="Helical" evidence="1">
    <location>
        <begin position="144"/>
        <end position="164"/>
    </location>
</feature>
<feature type="transmembrane region" description="Helical" evidence="1">
    <location>
        <begin position="165"/>
        <end position="185"/>
    </location>
</feature>
<keyword id="KW-1003">Cell membrane</keyword>
<keyword id="KW-0444">Lipid biosynthesis</keyword>
<keyword id="KW-0443">Lipid metabolism</keyword>
<keyword id="KW-0472">Membrane</keyword>
<keyword id="KW-0594">Phospholipid biosynthesis</keyword>
<keyword id="KW-1208">Phospholipid metabolism</keyword>
<keyword id="KW-0808">Transferase</keyword>
<keyword id="KW-0812">Transmembrane</keyword>
<keyword id="KW-1133">Transmembrane helix</keyword>
<dbReference type="EC" id="2.3.1.275" evidence="1"/>
<dbReference type="EMBL" id="CP000425">
    <property type="protein sequence ID" value="ABJ72601.1"/>
    <property type="molecule type" value="Genomic_DNA"/>
</dbReference>
<dbReference type="RefSeq" id="WP_011675988.1">
    <property type="nucleotide sequence ID" value="NC_008527.1"/>
</dbReference>
<dbReference type="SMR" id="Q02ZM1"/>
<dbReference type="GeneID" id="61109283"/>
<dbReference type="KEGG" id="llc:LACR_1064"/>
<dbReference type="HOGENOM" id="CLU_081254_4_0_9"/>
<dbReference type="UniPathway" id="UPA00085"/>
<dbReference type="Proteomes" id="UP000000240">
    <property type="component" value="Chromosome"/>
</dbReference>
<dbReference type="GO" id="GO:0005886">
    <property type="term" value="C:plasma membrane"/>
    <property type="evidence" value="ECO:0007669"/>
    <property type="project" value="UniProtKB-SubCell"/>
</dbReference>
<dbReference type="GO" id="GO:0043772">
    <property type="term" value="F:acyl-phosphate glycerol-3-phosphate acyltransferase activity"/>
    <property type="evidence" value="ECO:0007669"/>
    <property type="project" value="UniProtKB-UniRule"/>
</dbReference>
<dbReference type="GO" id="GO:0008654">
    <property type="term" value="P:phospholipid biosynthetic process"/>
    <property type="evidence" value="ECO:0007669"/>
    <property type="project" value="UniProtKB-UniRule"/>
</dbReference>
<dbReference type="HAMAP" id="MF_01043">
    <property type="entry name" value="PlsY"/>
    <property type="match status" value="1"/>
</dbReference>
<dbReference type="InterPro" id="IPR003811">
    <property type="entry name" value="G3P_acylTferase_PlsY"/>
</dbReference>
<dbReference type="NCBIfam" id="TIGR00023">
    <property type="entry name" value="glycerol-3-phosphate 1-O-acyltransferase PlsY"/>
    <property type="match status" value="1"/>
</dbReference>
<dbReference type="PANTHER" id="PTHR30309:SF0">
    <property type="entry name" value="GLYCEROL-3-PHOSPHATE ACYLTRANSFERASE-RELATED"/>
    <property type="match status" value="1"/>
</dbReference>
<dbReference type="PANTHER" id="PTHR30309">
    <property type="entry name" value="INNER MEMBRANE PROTEIN YGIH"/>
    <property type="match status" value="1"/>
</dbReference>
<dbReference type="Pfam" id="PF02660">
    <property type="entry name" value="G3P_acyltransf"/>
    <property type="match status" value="1"/>
</dbReference>
<dbReference type="SMART" id="SM01207">
    <property type="entry name" value="G3P_acyltransf"/>
    <property type="match status" value="1"/>
</dbReference>